<sequence>MSNPQDQLSNDLANASISGDQSKQPQQQQPQQQQPYFNPNQAQAFVPTGGYQQFQPQQQQQYGGYQQNYTQYQAGGYQQNYNNRGGYQQNYNNRGGYQQNYNNRGGYQQQQQQQYQAYNPNQQYGGYQAYNPQQQQQQQTQSQGMSLADFQKQKAEQQASLNKPAVKKTLKLASSSGIKLANATKKVDTAKPAASKEASPAPKDEEASAEPEAKKESTPVPASSSPAPAAADSTPAPVKKESTPTPSVASKSAPVSASASVVTADALAKEQEDEVDEEVVKDMFGGKDHVSIIFMGHVDAGKSTMGGNILYLTGSVDKRTVEKYEREAKDAGRQGWYLSWVMDTNKEERNDGKTIEVGKAYFETDKRRYTILDAPGHKMYVSEMIGGASQADVGILVISARKGEYETGFEKGGQTREHALLAKTQGVNKIIVVVNKMDDPTVNWSKERYQECTTKLGVFLKGIGYNKDDIINMPVSGYTGAGLKDRVNPKDCPWYEGPSLLEYLDNMDTMNRKINGPFMMPVSGKMKDLGTVVEGKIESGHVKKGTNLILMPNKTPVEVLTIYNETEQEADTAFSGEQVRLKIKGVEEEDLQPGYVLTSPKNPVKTVTKFEAQIAIVELKSILSNGFSCVMHLHTAIEEVKFVELKHKLEKGTNRKSKKPPAFAKKGMKIIAILEVSEPVCAETYKDYPQLGRFTLRDQGTTIAIGKITKLL</sequence>
<reference key="1">
    <citation type="journal article" date="2001" name="Mol. Cell">
        <title>Yeast [PSI+] 'prions' that are crosstransmissible and susceptible beyond a species barrier through a quasi-prion state.</title>
        <authorList>
            <person name="Nakayashiki T."/>
            <person name="Ebihara K."/>
            <person name="Bannai H."/>
            <person name="Nakamura Y."/>
        </authorList>
    </citation>
    <scope>NUCLEOTIDE SEQUENCE [GENOMIC DNA]</scope>
    <source>
        <strain>ATCC 28140 / CBS 5611 / IAM 12247 / JCM 1504 / NBRC 1977</strain>
    </source>
</reference>
<organism>
    <name type="scientific">Candida maltosa</name>
    <name type="common">Yeast</name>
    <dbReference type="NCBI Taxonomy" id="5479"/>
    <lineage>
        <taxon>Eukaryota</taxon>
        <taxon>Fungi</taxon>
        <taxon>Dikarya</taxon>
        <taxon>Ascomycota</taxon>
        <taxon>Saccharomycotina</taxon>
        <taxon>Pichiomycetes</taxon>
        <taxon>Debaryomycetaceae</taxon>
        <taxon>Candida/Lodderomyces clade</taxon>
        <taxon>Candida</taxon>
    </lineage>
</organism>
<comment type="function">
    <text>Involved in translation termination. Stimulates the activity of ERF1. Binds guanine nucleotides.</text>
</comment>
<comment type="subcellular location">
    <subcellularLocation>
        <location evidence="4">Cytoplasm</location>
    </subcellularLocation>
</comment>
<comment type="similarity">
    <text evidence="2">Belongs to the TRAFAC class translation factor GTPase superfamily. Classic translation factor GTPase family. ERF3 subfamily.</text>
</comment>
<accession>Q9HGI7</accession>
<feature type="chain" id="PRO_0000091484" description="Eukaryotic peptide chain release factor GTP-binding subunit">
    <location>
        <begin position="1"/>
        <end position="712"/>
    </location>
</feature>
<feature type="domain" description="tr-type G" evidence="2">
    <location>
        <begin position="287"/>
        <end position="512"/>
    </location>
</feature>
<feature type="region of interest" description="Disordered" evidence="3">
    <location>
        <begin position="1"/>
        <end position="64"/>
    </location>
</feature>
<feature type="region of interest" description="Several sort of repeats">
    <location>
        <begin position="16"/>
        <end position="143"/>
    </location>
</feature>
<feature type="region of interest" description="Disordered" evidence="3">
    <location>
        <begin position="76"/>
        <end position="115"/>
    </location>
</feature>
<feature type="region of interest" description="Disordered" evidence="3">
    <location>
        <begin position="132"/>
        <end position="162"/>
    </location>
</feature>
<feature type="region of interest" description="Charged">
    <location>
        <begin position="144"/>
        <end position="282"/>
    </location>
</feature>
<feature type="region of interest" description="Disordered" evidence="3">
    <location>
        <begin position="184"/>
        <end position="256"/>
    </location>
</feature>
<feature type="region of interest" description="G1" evidence="2">
    <location>
        <begin position="296"/>
        <end position="303"/>
    </location>
</feature>
<feature type="region of interest" description="G2" evidence="2">
    <location>
        <begin position="352"/>
        <end position="356"/>
    </location>
</feature>
<feature type="region of interest" description="G3" evidence="2">
    <location>
        <begin position="373"/>
        <end position="376"/>
    </location>
</feature>
<feature type="region of interest" description="G4" evidence="2">
    <location>
        <begin position="435"/>
        <end position="438"/>
    </location>
</feature>
<feature type="region of interest" description="G5" evidence="2">
    <location>
        <begin position="476"/>
        <end position="478"/>
    </location>
</feature>
<feature type="compositionally biased region" description="Polar residues" evidence="3">
    <location>
        <begin position="1"/>
        <end position="23"/>
    </location>
</feature>
<feature type="compositionally biased region" description="Low complexity" evidence="3">
    <location>
        <begin position="24"/>
        <end position="35"/>
    </location>
</feature>
<feature type="compositionally biased region" description="Low complexity" evidence="3">
    <location>
        <begin position="48"/>
        <end position="64"/>
    </location>
</feature>
<feature type="compositionally biased region" description="Low complexity" evidence="3">
    <location>
        <begin position="132"/>
        <end position="141"/>
    </location>
</feature>
<feature type="compositionally biased region" description="Low complexity" evidence="3">
    <location>
        <begin position="190"/>
        <end position="201"/>
    </location>
</feature>
<feature type="compositionally biased region" description="Basic and acidic residues" evidence="3">
    <location>
        <begin position="202"/>
        <end position="217"/>
    </location>
</feature>
<feature type="compositionally biased region" description="Low complexity" evidence="3">
    <location>
        <begin position="218"/>
        <end position="256"/>
    </location>
</feature>
<feature type="binding site" evidence="1">
    <location>
        <begin position="296"/>
        <end position="303"/>
    </location>
    <ligand>
        <name>GTP</name>
        <dbReference type="ChEBI" id="CHEBI:37565"/>
    </ligand>
</feature>
<feature type="binding site" evidence="1">
    <location>
        <begin position="373"/>
        <end position="377"/>
    </location>
    <ligand>
        <name>GTP</name>
        <dbReference type="ChEBI" id="CHEBI:37565"/>
    </ligand>
</feature>
<feature type="binding site" evidence="1">
    <location>
        <begin position="435"/>
        <end position="438"/>
    </location>
    <ligand>
        <name>GTP</name>
        <dbReference type="ChEBI" id="CHEBI:37565"/>
    </ligand>
</feature>
<feature type="modified residue" description="Phosphothreonine" evidence="1">
    <location>
        <position position="370"/>
    </location>
</feature>
<keyword id="KW-0963">Cytoplasm</keyword>
<keyword id="KW-0342">GTP-binding</keyword>
<keyword id="KW-0547">Nucleotide-binding</keyword>
<keyword id="KW-0597">Phosphoprotein</keyword>
<keyword id="KW-0648">Protein biosynthesis</keyword>
<keyword id="KW-0677">Repeat</keyword>
<protein>
    <recommendedName>
        <fullName>Eukaryotic peptide chain release factor GTP-binding subunit</fullName>
    </recommendedName>
    <alternativeName>
        <fullName>ERF-3</fullName>
        <shortName>ERF3</shortName>
    </alternativeName>
    <alternativeName>
        <fullName>ERF2</fullName>
    </alternativeName>
    <alternativeName>
        <fullName>Polypeptide release factor 3</fullName>
    </alternativeName>
    <alternativeName>
        <fullName>Translation release factor 3</fullName>
    </alternativeName>
</protein>
<gene>
    <name type="primary">SUP35</name>
</gene>
<dbReference type="EMBL" id="AB039750">
    <property type="protein sequence ID" value="BAB12681.2"/>
    <property type="molecule type" value="Genomic_DNA"/>
</dbReference>
<dbReference type="SMR" id="Q9HGI7"/>
<dbReference type="GO" id="GO:0005737">
    <property type="term" value="C:cytoplasm"/>
    <property type="evidence" value="ECO:0007669"/>
    <property type="project" value="UniProtKB-SubCell"/>
</dbReference>
<dbReference type="GO" id="GO:0005525">
    <property type="term" value="F:GTP binding"/>
    <property type="evidence" value="ECO:0007669"/>
    <property type="project" value="UniProtKB-KW"/>
</dbReference>
<dbReference type="GO" id="GO:0003924">
    <property type="term" value="F:GTPase activity"/>
    <property type="evidence" value="ECO:0007669"/>
    <property type="project" value="InterPro"/>
</dbReference>
<dbReference type="GO" id="GO:0003747">
    <property type="term" value="F:translation release factor activity"/>
    <property type="evidence" value="ECO:0007669"/>
    <property type="project" value="InterPro"/>
</dbReference>
<dbReference type="GO" id="GO:0000288">
    <property type="term" value="P:nuclear-transcribed mRNA catabolic process, deadenylation-dependent decay"/>
    <property type="evidence" value="ECO:0007669"/>
    <property type="project" value="InterPro"/>
</dbReference>
<dbReference type="CDD" id="cd01883">
    <property type="entry name" value="EF1_alpha"/>
    <property type="match status" value="1"/>
</dbReference>
<dbReference type="CDD" id="cd03704">
    <property type="entry name" value="eRF3_C_III"/>
    <property type="match status" value="1"/>
</dbReference>
<dbReference type="CDD" id="cd04089">
    <property type="entry name" value="eRF3_II"/>
    <property type="match status" value="1"/>
</dbReference>
<dbReference type="FunFam" id="2.40.30.10:FF:000017">
    <property type="entry name" value="Eukaryotic peptide chain release factor GTP-binding subunit"/>
    <property type="match status" value="1"/>
</dbReference>
<dbReference type="FunFam" id="3.40.50.300:FF:000503">
    <property type="entry name" value="Peptide chain release factor subunit 3"/>
    <property type="match status" value="1"/>
</dbReference>
<dbReference type="FunFam" id="2.40.30.10:FF:000061">
    <property type="entry name" value="Translation release factor eRF3, putative"/>
    <property type="match status" value="1"/>
</dbReference>
<dbReference type="Gene3D" id="3.40.50.300">
    <property type="entry name" value="P-loop containing nucleotide triphosphate hydrolases"/>
    <property type="match status" value="1"/>
</dbReference>
<dbReference type="Gene3D" id="2.40.30.10">
    <property type="entry name" value="Translation factors"/>
    <property type="match status" value="2"/>
</dbReference>
<dbReference type="InterPro" id="IPR004161">
    <property type="entry name" value="EFTu-like_2"/>
</dbReference>
<dbReference type="InterPro" id="IPR031157">
    <property type="entry name" value="G_TR_CS"/>
</dbReference>
<dbReference type="InterPro" id="IPR054696">
    <property type="entry name" value="GTP-eEF1A_C"/>
</dbReference>
<dbReference type="InterPro" id="IPR027417">
    <property type="entry name" value="P-loop_NTPase"/>
</dbReference>
<dbReference type="InterPro" id="IPR003285">
    <property type="entry name" value="Sup35"/>
</dbReference>
<dbReference type="InterPro" id="IPR000795">
    <property type="entry name" value="T_Tr_GTP-bd_dom"/>
</dbReference>
<dbReference type="InterPro" id="IPR050100">
    <property type="entry name" value="TRAFAC_GTPase_members"/>
</dbReference>
<dbReference type="InterPro" id="IPR009000">
    <property type="entry name" value="Transl_B-barrel_sf"/>
</dbReference>
<dbReference type="InterPro" id="IPR009001">
    <property type="entry name" value="Transl_elong_EF1A/Init_IF2_C"/>
</dbReference>
<dbReference type="PANTHER" id="PTHR23115">
    <property type="entry name" value="TRANSLATION FACTOR"/>
    <property type="match status" value="1"/>
</dbReference>
<dbReference type="Pfam" id="PF22594">
    <property type="entry name" value="GTP-eEF1A_C"/>
    <property type="match status" value="1"/>
</dbReference>
<dbReference type="Pfam" id="PF00009">
    <property type="entry name" value="GTP_EFTU"/>
    <property type="match status" value="1"/>
</dbReference>
<dbReference type="Pfam" id="PF03144">
    <property type="entry name" value="GTP_EFTU_D2"/>
    <property type="match status" value="1"/>
</dbReference>
<dbReference type="PRINTS" id="PR00315">
    <property type="entry name" value="ELONGATNFCT"/>
</dbReference>
<dbReference type="PRINTS" id="PR01343">
    <property type="entry name" value="YEASTERF"/>
</dbReference>
<dbReference type="SUPFAM" id="SSF50465">
    <property type="entry name" value="EF-Tu/eEF-1alpha/eIF2-gamma C-terminal domain"/>
    <property type="match status" value="1"/>
</dbReference>
<dbReference type="SUPFAM" id="SSF52540">
    <property type="entry name" value="P-loop containing nucleoside triphosphate hydrolases"/>
    <property type="match status" value="1"/>
</dbReference>
<dbReference type="SUPFAM" id="SSF50447">
    <property type="entry name" value="Translation proteins"/>
    <property type="match status" value="1"/>
</dbReference>
<dbReference type="PROSITE" id="PS00301">
    <property type="entry name" value="G_TR_1"/>
    <property type="match status" value="1"/>
</dbReference>
<dbReference type="PROSITE" id="PS51722">
    <property type="entry name" value="G_TR_2"/>
    <property type="match status" value="1"/>
</dbReference>
<evidence type="ECO:0000250" key="1"/>
<evidence type="ECO:0000255" key="2">
    <source>
        <dbReference type="PROSITE-ProRule" id="PRU01059"/>
    </source>
</evidence>
<evidence type="ECO:0000256" key="3">
    <source>
        <dbReference type="SAM" id="MobiDB-lite"/>
    </source>
</evidence>
<evidence type="ECO:0000305" key="4"/>
<proteinExistence type="inferred from homology"/>
<name>ERF3_CANMA</name>